<protein>
    <recommendedName>
        <fullName>Vascular endothelial growth factor receptor 3</fullName>
        <shortName>VEGFR-3</shortName>
        <ecNumber>2.7.10.1</ecNumber>
    </recommendedName>
    <alternativeName>
        <fullName>Fms-like tyrosine kinase 4</fullName>
        <shortName>FLT-4</shortName>
    </alternativeName>
    <alternativeName>
        <fullName>Tyrosine-protein kinase receptor FLT4</fullName>
    </alternativeName>
</protein>
<comment type="function">
    <text evidence="1">Tyrosine-protein kinase that acts as a cell-surface receptor for VEGFC and VEGFD, and plays an essential role in adult lymphangiogenesis and in the development of the vascular network and the cardiovascular system during embryonic development. Promotes proliferation, survival and migration of endothelial cells, and regulates angiogenic sprouting. Signaling by activated FLT4 leads to enhanced production of VEGFC, and to a lesser degree VEGFA, thereby creating a positive feedback loop that enhances FLT4 signaling. Modulates KDR signaling by forming heterodimers. Mediates activation of the MAPK1/ERK2, MAPK3/ERK1 signaling pathway, of MAPK8 and the JUN signaling pathway, and of the AKT1 signaling pathway. Phosphorylates SHC1. Mediates phosphorylation of PIK3R1, the regulatory subunit of phosphatidylinositol 3-kinase. Promotes phosphorylation of MAPK8 at 'Thr-183' and 'Tyr-185', and of AKT1 at 'Ser-473' (By similarity).</text>
</comment>
<comment type="catalytic activity">
    <reaction evidence="6">
        <text>L-tyrosyl-[protein] + ATP = O-phospho-L-tyrosyl-[protein] + ADP + H(+)</text>
        <dbReference type="Rhea" id="RHEA:10596"/>
        <dbReference type="Rhea" id="RHEA-COMP:10136"/>
        <dbReference type="Rhea" id="RHEA-COMP:20101"/>
        <dbReference type="ChEBI" id="CHEBI:15378"/>
        <dbReference type="ChEBI" id="CHEBI:30616"/>
        <dbReference type="ChEBI" id="CHEBI:46858"/>
        <dbReference type="ChEBI" id="CHEBI:61978"/>
        <dbReference type="ChEBI" id="CHEBI:456216"/>
        <dbReference type="EC" id="2.7.10.1"/>
    </reaction>
</comment>
<comment type="activity regulation">
    <text evidence="1">Present in an inactive conformation in the absence of bound ligand. Binding of VEGFC or VEGFD leads to dimerization and activation by autophosphorylation on tyrosine residues (By similarity).</text>
</comment>
<comment type="subunit">
    <text evidence="1">Interacts with VEGFC and VEGFD. Monomer in the absence of bound VEGFC or VEGFD. Homodimer in the presence of bound VEGFC or VEGFD. Can also form a heterodimer with KDR. Interacts with PTPN14; the interaction is enhanced by stimulation with VEGFC. Interacts with CRK, GRB2, PTK2/FAK1, SHC1, PIK3R1 and PTPN11/SHP-2. Identified in a complex with SRC and ITGB1 (By similarity). Identified in a complex with SRC and ITGB1 (By similarity).</text>
</comment>
<comment type="subcellular location">
    <subcellularLocation>
        <location evidence="2">Cell membrane</location>
        <topology evidence="2">Single-pass type I membrane protein</topology>
    </subcellularLocation>
    <subcellularLocation>
        <location evidence="2">Cytoplasm</location>
    </subcellularLocation>
    <subcellularLocation>
        <location evidence="1">Nucleus</location>
    </subcellularLocation>
    <text evidence="2">Ligand-mediated autophosphorylation leads to rapid internalization.</text>
</comment>
<comment type="alternative products">
    <event type="alternative splicing"/>
    <isoform>
        <id>Q91ZT1-1</id>
        <name>1</name>
        <sequence type="displayed"/>
    </isoform>
    <isoform>
        <id>Q91ZT1-2</id>
        <name>2</name>
        <name>VEGFR3-kt</name>
        <sequence type="described" ref="VSP_016721 VSP_016722"/>
    </isoform>
</comment>
<comment type="developmental stage">
    <text evidence="8">Increases during pregnancy (2.2-fold at 4 days) and lactation (1.5-fold at 21 days). Decreases in the early phases of involution (33%, 21%, and 45% on days 1, 2, and 3 respectively).</text>
</comment>
<comment type="domain">
    <text evidence="1">The first and second Ig-like C2-type (immunoglobulin-like) domains are sufficient for VEGFC binding. The fourth and fifth Ig-like C2-type (immunoglobulin-like) domains are sufficient for homodimerization. The fifth and seventh Ig-like C2-type (immunoglobulin-like) domains are required for autophosphorylation and further activation.</text>
</comment>
<comment type="PTM">
    <text evidence="1">Autophosphorylated on tyrosine residues upon ligand binding. Autophosphorylation occurs in trans, i.e. one subunit of the dimeric receptor phosphorylates tyrosine residues on the other subunit. Phosphorylation in response to H(2)O(2) is mediated by a process that requires SRC and PRKCD activity. Phosphorylation at Tyr-1068 is required for autophosphorylation at additional tyrosine residues. Phosphorylation at Tyr-1063 and Tyr-1337 is important for interaction with CRK and subsequent activation of MAPK8. Phosphorylation at Tyr-1230, Tyr-1231 and Tyr-1337 is important for interaction with GRB2 and subsequent activation of the AKT1 and MAPK1/ERK2 and/or MAPK3/ERK1 signaling pathways. In response to endothelial cell adhesion onto collagen, can also be phosphorylated in the absence of FLT4 kinase activity by SRC (By similarity).</text>
</comment>
<comment type="similarity">
    <text evidence="5">Belongs to the protein kinase superfamily. Tyr protein kinase family. CSF-1/PDGF receptor subfamily.</text>
</comment>
<feature type="signal peptide" evidence="3">
    <location>
        <begin position="1"/>
        <end position="24"/>
    </location>
</feature>
<feature type="chain" id="PRO_0000045280" description="Vascular endothelial growth factor receptor 3">
    <location>
        <begin position="25"/>
        <end position="1363"/>
    </location>
</feature>
<feature type="topological domain" description="Extracellular" evidence="3">
    <location>
        <begin position="25"/>
        <end position="775"/>
    </location>
</feature>
<feature type="transmembrane region" description="Helical" evidence="3">
    <location>
        <begin position="776"/>
        <end position="796"/>
    </location>
</feature>
<feature type="topological domain" description="Cytoplasmic" evidence="3">
    <location>
        <begin position="797"/>
        <end position="1363"/>
    </location>
</feature>
<feature type="domain" description="Ig-like C2-type 1">
    <location>
        <begin position="44"/>
        <end position="118"/>
    </location>
</feature>
<feature type="domain" description="Ig-like C2-type 2">
    <location>
        <begin position="151"/>
        <end position="213"/>
    </location>
</feature>
<feature type="domain" description="Ig-like C2-type 3">
    <location>
        <begin position="230"/>
        <end position="326"/>
    </location>
</feature>
<feature type="domain" description="Ig-like C2-type 4">
    <location>
        <begin position="331"/>
        <end position="415"/>
    </location>
</feature>
<feature type="domain" description="Ig-like C2-type 5">
    <location>
        <begin position="422"/>
        <end position="552"/>
    </location>
</feature>
<feature type="domain" description="Ig-like C2-type 6">
    <location>
        <begin position="555"/>
        <end position="671"/>
    </location>
</feature>
<feature type="domain" description="Ig-like C2-type 7">
    <location>
        <begin position="678"/>
        <end position="764"/>
    </location>
</feature>
<feature type="domain" description="Protein kinase" evidence="5">
    <location>
        <begin position="845"/>
        <end position="1173"/>
    </location>
</feature>
<feature type="region of interest" description="Disordered" evidence="7">
    <location>
        <begin position="1289"/>
        <end position="1330"/>
    </location>
</feature>
<feature type="compositionally biased region" description="Basic and acidic residues" evidence="7">
    <location>
        <begin position="1289"/>
        <end position="1317"/>
    </location>
</feature>
<feature type="active site" description="Proton acceptor" evidence="5 6">
    <location>
        <position position="1037"/>
    </location>
</feature>
<feature type="binding site" evidence="5">
    <location>
        <begin position="851"/>
        <end position="859"/>
    </location>
    <ligand>
        <name>ATP</name>
        <dbReference type="ChEBI" id="CHEBI:30616"/>
    </ligand>
</feature>
<feature type="binding site" evidence="5">
    <location>
        <position position="879"/>
    </location>
    <ligand>
        <name>ATP</name>
        <dbReference type="ChEBI" id="CHEBI:30616"/>
    </ligand>
</feature>
<feature type="modified residue" description="Phosphotyrosine; by SRC" evidence="1">
    <location>
        <position position="830"/>
    </location>
</feature>
<feature type="modified residue" description="Phosphotyrosine; by SRC" evidence="1">
    <location>
        <position position="833"/>
    </location>
</feature>
<feature type="modified residue" description="Phosphotyrosine; by autocatalysis and SRC" evidence="1">
    <location>
        <position position="1063"/>
    </location>
</feature>
<feature type="modified residue" description="Phosphotyrosine; by autocatalysis" evidence="1">
    <location>
        <position position="1068"/>
    </location>
</feature>
<feature type="modified residue" description="Phosphotyrosine; by autocatalysis" evidence="1">
    <location>
        <position position="1230"/>
    </location>
</feature>
<feature type="modified residue" description="Phosphotyrosine; by autocatalysis" evidence="1">
    <location>
        <position position="1231"/>
    </location>
</feature>
<feature type="modified residue" description="Phosphotyrosine; by autocatalysis" evidence="1">
    <location>
        <position position="1265"/>
    </location>
</feature>
<feature type="modified residue" description="Phosphotyrosine; by autocatalysis and SRC" evidence="1">
    <location>
        <position position="1333"/>
    </location>
</feature>
<feature type="modified residue" description="Phosphotyrosine; by autocatalysis and SRC" evidence="1">
    <location>
        <position position="1337"/>
    </location>
</feature>
<feature type="modified residue" description="Phosphotyrosine; by autocatalysis" evidence="1">
    <location>
        <position position="1363"/>
    </location>
</feature>
<feature type="glycosylation site" description="N-linked (GlcNAc...) asparagine" evidence="3">
    <location>
        <position position="33"/>
    </location>
</feature>
<feature type="glycosylation site" description="N-linked (GlcNAc...) asparagine" evidence="3">
    <location>
        <position position="104"/>
    </location>
</feature>
<feature type="glycosylation site" description="N-linked (GlcNAc...) asparagine" evidence="3">
    <location>
        <position position="166"/>
    </location>
</feature>
<feature type="glycosylation site" description="N-linked (GlcNAc...) asparagine" evidence="3">
    <location>
        <position position="251"/>
    </location>
</feature>
<feature type="glycosylation site" description="N-linked (GlcNAc...) asparagine" evidence="3">
    <location>
        <position position="299"/>
    </location>
</feature>
<feature type="glycosylation site" description="N-linked (GlcNAc...) asparagine" evidence="3">
    <location>
        <position position="411"/>
    </location>
</feature>
<feature type="glycosylation site" description="N-linked (GlcNAc...) asparagine" evidence="3">
    <location>
        <position position="515"/>
    </location>
</feature>
<feature type="glycosylation site" description="N-linked (GlcNAc...) asparagine" evidence="3">
    <location>
        <position position="527"/>
    </location>
</feature>
<feature type="glycosylation site" description="N-linked (GlcNAc...) asparagine" evidence="3">
    <location>
        <position position="582"/>
    </location>
</feature>
<feature type="glycosylation site" description="N-linked (GlcNAc...) asparagine" evidence="3">
    <location>
        <position position="594"/>
    </location>
</feature>
<feature type="glycosylation site" description="N-linked (GlcNAc...) asparagine" evidence="3">
    <location>
        <position position="683"/>
    </location>
</feature>
<feature type="glycosylation site" description="N-linked (GlcNAc...) asparagine" evidence="3">
    <location>
        <position position="758"/>
    </location>
</feature>
<feature type="disulfide bond" evidence="4">
    <location>
        <begin position="51"/>
        <end position="111"/>
    </location>
</feature>
<feature type="disulfide bond" evidence="4">
    <location>
        <begin position="158"/>
        <end position="206"/>
    </location>
</feature>
<feature type="disulfide bond" evidence="4">
    <location>
        <begin position="252"/>
        <end position="310"/>
    </location>
</feature>
<feature type="disulfide bond" evidence="4">
    <location>
        <begin position="445"/>
        <end position="534"/>
    </location>
</feature>
<feature type="disulfide bond" evidence="1">
    <location>
        <begin position="466"/>
        <end position="486"/>
    </location>
</feature>
<feature type="disulfide bond" evidence="4">
    <location>
        <begin position="578"/>
        <end position="653"/>
    </location>
</feature>
<feature type="disulfide bond" evidence="4">
    <location>
        <begin position="699"/>
        <end position="751"/>
    </location>
</feature>
<feature type="splice variant" id="VSP_016721" description="In isoform 2." evidence="9">
    <original>KWMAPESIFDKVYT</original>
    <variation>HTLGYRSMRNSASG</variation>
    <location>
        <begin position="1079"/>
        <end position="1092"/>
    </location>
</feature>
<feature type="splice variant" id="VSP_016722" description="In isoform 2." evidence="9">
    <location>
        <begin position="1093"/>
        <end position="1363"/>
    </location>
</feature>
<name>VGFR3_RAT</name>
<evidence type="ECO:0000250" key="1">
    <source>
        <dbReference type="UniProtKB" id="P35916"/>
    </source>
</evidence>
<evidence type="ECO:0000250" key="2">
    <source>
        <dbReference type="UniProtKB" id="P35917"/>
    </source>
</evidence>
<evidence type="ECO:0000255" key="3"/>
<evidence type="ECO:0000255" key="4">
    <source>
        <dbReference type="PROSITE-ProRule" id="PRU00114"/>
    </source>
</evidence>
<evidence type="ECO:0000255" key="5">
    <source>
        <dbReference type="PROSITE-ProRule" id="PRU00159"/>
    </source>
</evidence>
<evidence type="ECO:0000255" key="6">
    <source>
        <dbReference type="PROSITE-ProRule" id="PRU10028"/>
    </source>
</evidence>
<evidence type="ECO:0000256" key="7">
    <source>
        <dbReference type="SAM" id="MobiDB-lite"/>
    </source>
</evidence>
<evidence type="ECO:0000269" key="8">
    <source>
    </source>
</evidence>
<evidence type="ECO:0000303" key="9">
    <source ref="1"/>
</evidence>
<reference key="1">
    <citation type="submission" date="2001-07" db="EMBL/GenBank/DDBJ databases">
        <title>Characterization of a novel alternatively spliced form of VEGFR-3.</title>
        <authorList>
            <person name="Krishnan J."/>
            <person name="Sleeman J.P."/>
        </authorList>
    </citation>
    <scope>NUCLEOTIDE SEQUENCE [MRNA] (ISOFORMS 1 AND 2)</scope>
    <source>
        <strain>Sprague-Dawley</strain>
    </source>
</reference>
<reference key="2">
    <citation type="submission" date="2007-07" db="UniProtKB">
        <authorList>
            <person name="Lubec G."/>
            <person name="Kang S.U."/>
        </authorList>
    </citation>
    <scope>PROTEIN SEQUENCE OF 1053-1060</scope>
    <scope>IDENTIFICATION BY MASS SPECTROMETRY</scope>
    <source>
        <strain>Sprague-Dawley</strain>
        <tissue>Brain</tissue>
    </source>
</reference>
<reference key="3">
    <citation type="journal article" date="2000" name="Dev. Dyn.">
        <title>Regulation of VEGF and VEGF receptor expression in the rodent mammary gland during pregnancy, lactation, and involution.</title>
        <authorList>
            <person name="Pepper M.S."/>
            <person name="Baetens D."/>
            <person name="Mandriota S.J."/>
            <person name="Di Sanza C."/>
            <person name="Oikemus S."/>
            <person name="Lane T.F."/>
            <person name="Soriano J.V."/>
            <person name="Montesano R."/>
            <person name="Iruela-Arispe M.L."/>
        </authorList>
    </citation>
    <scope>NUCLEOTIDE SEQUENCE [MRNA] OF 1197-1315 (ISOFORM 1)</scope>
    <scope>DEVELOPMENTAL STAGE</scope>
    <source>
        <strain>Sprague-Dawley</strain>
        <tissue>Lung</tissue>
    </source>
</reference>
<proteinExistence type="evidence at protein level"/>
<accession>Q91ZT1</accession>
<accession>O35755</accession>
<accession>Q91ZT0</accession>
<sequence length="1363" mass="153317">MQPGAALNRRLWLCLGLLQGLANGYSMTPPTLNITEDSYVIDTGDSLSISCRGQHPLEWTWRGAQEVLTTGGKDSEDTQVVQDCEGTEARPYCKVLSLAQTHANNTGSYYCYYKYIKARIEGTTAASTYVFVRDFEQPFINKPDTLLVNRKDSMWVPCLVSIPGLNITLRSQSSVLHPDGQEVLWDDRRGMRVPTLLLRDALYLQCETTWGDQDFLSNPFLVHITGNELYDIQLYPKKSLELLVGEKLVLNCTVWAEFDSGVTFDWDYPGKQAERAKWVPERRSQQTHTELSSILTIHNVSQHDLGPYVCEANNGIQQFRESTEVIVHEKPFISVEWLKGPVLEATAGDEMVKLPVKLAAYPPPEFQWYKDRKAVTGRHNPHALVLKEVTEASAGVYTLALWNSAAGLRQNISLELVVNVPPHIHEKEASSPSIYSRHSRQTLTCTTYGVPQPLSVQWHWRPWTPCKTFAQRSLRRRQPRDGMPQCRDWKEVTTQDAVNPIESLDTWTESVEGKNKTVSKLVIQDANVSAMYKCVVFNKVGQDERLIYFYVTTIPDGFSIESEPSEDPLEGQSVRLSCRADNYTYEHLRWYRLNLSTLHDAQGNPLLLDCKNVHLFATPLEANLEEAEPGARHATLSLNIPRVAPEDEGDYVCEVQDRRSQDKHCHKKYLSVQALEAPRLTQNLTDLLVNVRTSLEMRCPVAGAHVPSIVWYKDERLLEKESGIDLADSNQRLSIQRVREEDAGRYLCSVCNAKGCVNSSASVAVEGSEDKGSMEIVILIGTGVIAVFFWVLLLLIFCNMKRPAHADIKTGYLSIIMDPGEVPLEEQCEYLSYDVSQWEFPRERLHLGRVLGHGAFGKVVEASAFGINKGSSCDTVAVKMLKEGATASEHRALMSELKILIHIGNHLNVVNLLGACTKPNGPLMVIVEFCKYGNLSNFLRVKRETFDPYAEKSPEQRRRFRAMVEGAKADRRRLGSTDRALFTRFLMGKGSARRAPFVQEAEDLWLSPLTMEDLVCYSFQVARGMEFLASRKCIHRDLAARNILLSESDIVKICDFGLARDIYKDPDYVRKGSARLPLKWMAPESIFDKVYTTQSDVWSFGVLLWEIFSLGASPYPGVQINEEFCQRLKDGTRMRAPELATPAIRHIMQSCWSGDPKARPAFSDLVEILGDLLQGGGWQEEEEECMALHSSQSSEEDGFMQASTTALHITEADAESSPPSMHCHSLAARYYNCVSFPGRLVRGTKAPGSSRMKTFEELPMTPTTYKASVDNQTDSGMVLASEEFEQIESRHRQEGSFSRKDPGQHMDISRGHPDLQGRRRRPTQGAQGGKVFYNNEYGEVSQPCTEGDCCPSAGSTFFADSNY</sequence>
<organism>
    <name type="scientific">Rattus norvegicus</name>
    <name type="common">Rat</name>
    <dbReference type="NCBI Taxonomy" id="10116"/>
    <lineage>
        <taxon>Eukaryota</taxon>
        <taxon>Metazoa</taxon>
        <taxon>Chordata</taxon>
        <taxon>Craniata</taxon>
        <taxon>Vertebrata</taxon>
        <taxon>Euteleostomi</taxon>
        <taxon>Mammalia</taxon>
        <taxon>Eutheria</taxon>
        <taxon>Euarchontoglires</taxon>
        <taxon>Glires</taxon>
        <taxon>Rodentia</taxon>
        <taxon>Myomorpha</taxon>
        <taxon>Muroidea</taxon>
        <taxon>Muridae</taxon>
        <taxon>Murinae</taxon>
        <taxon>Rattus</taxon>
    </lineage>
</organism>
<keyword id="KW-0025">Alternative splicing</keyword>
<keyword id="KW-0037">Angiogenesis</keyword>
<keyword id="KW-0067">ATP-binding</keyword>
<keyword id="KW-1003">Cell membrane</keyword>
<keyword id="KW-0963">Cytoplasm</keyword>
<keyword id="KW-0903">Direct protein sequencing</keyword>
<keyword id="KW-1015">Disulfide bond</keyword>
<keyword id="KW-0325">Glycoprotein</keyword>
<keyword id="KW-0393">Immunoglobulin domain</keyword>
<keyword id="KW-0418">Kinase</keyword>
<keyword id="KW-0472">Membrane</keyword>
<keyword id="KW-0547">Nucleotide-binding</keyword>
<keyword id="KW-0539">Nucleus</keyword>
<keyword id="KW-0597">Phosphoprotein</keyword>
<keyword id="KW-0675">Receptor</keyword>
<keyword id="KW-1185">Reference proteome</keyword>
<keyword id="KW-0677">Repeat</keyword>
<keyword id="KW-0732">Signal</keyword>
<keyword id="KW-0808">Transferase</keyword>
<keyword id="KW-0812">Transmembrane</keyword>
<keyword id="KW-1133">Transmembrane helix</keyword>
<keyword id="KW-0829">Tyrosine-protein kinase</keyword>
<dbReference type="EC" id="2.7.10.1"/>
<dbReference type="EMBL" id="AF402785">
    <property type="protein sequence ID" value="AAL13269.1"/>
    <property type="molecule type" value="mRNA"/>
</dbReference>
<dbReference type="EMBL" id="AF402786">
    <property type="protein sequence ID" value="AAL13270.1"/>
    <property type="molecule type" value="mRNA"/>
</dbReference>
<dbReference type="EMBL" id="AF010131">
    <property type="protein sequence ID" value="AAB63249.1"/>
    <property type="molecule type" value="mRNA"/>
</dbReference>
<dbReference type="RefSeq" id="NP_446104.1">
    <property type="nucleotide sequence ID" value="NM_053652.1"/>
</dbReference>
<dbReference type="SMR" id="Q91ZT1"/>
<dbReference type="FunCoup" id="Q91ZT1">
    <property type="interactions" value="729"/>
</dbReference>
<dbReference type="IntAct" id="Q91ZT1">
    <property type="interactions" value="1"/>
</dbReference>
<dbReference type="MINT" id="Q91ZT1"/>
<dbReference type="STRING" id="10116.ENSRNOP00000003519"/>
<dbReference type="GlyCosmos" id="Q91ZT1">
    <property type="glycosylation" value="12 sites, No reported glycans"/>
</dbReference>
<dbReference type="GlyGen" id="Q91ZT1">
    <property type="glycosylation" value="13 sites"/>
</dbReference>
<dbReference type="iPTMnet" id="Q91ZT1"/>
<dbReference type="PhosphoSitePlus" id="Q91ZT1"/>
<dbReference type="jPOST" id="Q91ZT1"/>
<dbReference type="PaxDb" id="10116-ENSRNOP00000003519"/>
<dbReference type="GeneID" id="114110"/>
<dbReference type="KEGG" id="rno:114110"/>
<dbReference type="UCSC" id="RGD:621737">
    <molecule id="Q91ZT1-1"/>
    <property type="organism name" value="rat"/>
</dbReference>
<dbReference type="AGR" id="RGD:621737"/>
<dbReference type="CTD" id="2324"/>
<dbReference type="RGD" id="621737">
    <property type="gene designation" value="Flt4"/>
</dbReference>
<dbReference type="eggNOG" id="KOG0200">
    <property type="taxonomic scope" value="Eukaryota"/>
</dbReference>
<dbReference type="InParanoid" id="Q91ZT1"/>
<dbReference type="PhylomeDB" id="Q91ZT1"/>
<dbReference type="Reactome" id="R-RNO-195399">
    <property type="pathway name" value="VEGF binds to VEGFR leading to receptor dimerization"/>
</dbReference>
<dbReference type="PRO" id="PR:Q91ZT1"/>
<dbReference type="Proteomes" id="UP000002494">
    <property type="component" value="Unplaced"/>
</dbReference>
<dbReference type="GO" id="GO:0005737">
    <property type="term" value="C:cytoplasm"/>
    <property type="evidence" value="ECO:0007669"/>
    <property type="project" value="UniProtKB-SubCell"/>
</dbReference>
<dbReference type="GO" id="GO:0005634">
    <property type="term" value="C:nucleus"/>
    <property type="evidence" value="ECO:0007669"/>
    <property type="project" value="UniProtKB-SubCell"/>
</dbReference>
<dbReference type="GO" id="GO:0005886">
    <property type="term" value="C:plasma membrane"/>
    <property type="evidence" value="ECO:0000266"/>
    <property type="project" value="RGD"/>
</dbReference>
<dbReference type="GO" id="GO:0043235">
    <property type="term" value="C:receptor complex"/>
    <property type="evidence" value="ECO:0000266"/>
    <property type="project" value="RGD"/>
</dbReference>
<dbReference type="GO" id="GO:0005524">
    <property type="term" value="F:ATP binding"/>
    <property type="evidence" value="ECO:0007669"/>
    <property type="project" value="UniProtKB-KW"/>
</dbReference>
<dbReference type="GO" id="GO:0019838">
    <property type="term" value="F:growth factor binding"/>
    <property type="evidence" value="ECO:0000315"/>
    <property type="project" value="RGD"/>
</dbReference>
<dbReference type="GO" id="GO:0042803">
    <property type="term" value="F:protein homodimerization activity"/>
    <property type="evidence" value="ECO:0000250"/>
    <property type="project" value="UniProtKB"/>
</dbReference>
<dbReference type="GO" id="GO:0019903">
    <property type="term" value="F:protein phosphatase binding"/>
    <property type="evidence" value="ECO:0000266"/>
    <property type="project" value="RGD"/>
</dbReference>
<dbReference type="GO" id="GO:0004714">
    <property type="term" value="F:transmembrane receptor protein tyrosine kinase activity"/>
    <property type="evidence" value="ECO:0000266"/>
    <property type="project" value="RGD"/>
</dbReference>
<dbReference type="GO" id="GO:0005021">
    <property type="term" value="F:vascular endothelial growth factor receptor activity"/>
    <property type="evidence" value="ECO:0000315"/>
    <property type="project" value="RGD"/>
</dbReference>
<dbReference type="GO" id="GO:0048514">
    <property type="term" value="P:blood vessel morphogenesis"/>
    <property type="evidence" value="ECO:0000250"/>
    <property type="project" value="UniProtKB"/>
</dbReference>
<dbReference type="GO" id="GO:0016477">
    <property type="term" value="P:cell migration"/>
    <property type="evidence" value="ECO:0000318"/>
    <property type="project" value="GO_Central"/>
</dbReference>
<dbReference type="GO" id="GO:0035924">
    <property type="term" value="P:cellular response to vascular endothelial growth factor stimulus"/>
    <property type="evidence" value="ECO:0000266"/>
    <property type="project" value="RGD"/>
</dbReference>
<dbReference type="GO" id="GO:0048286">
    <property type="term" value="P:lung alveolus development"/>
    <property type="evidence" value="ECO:0000266"/>
    <property type="project" value="RGD"/>
</dbReference>
<dbReference type="GO" id="GO:0001945">
    <property type="term" value="P:lymph vessel development"/>
    <property type="evidence" value="ECO:0000266"/>
    <property type="project" value="RGD"/>
</dbReference>
<dbReference type="GO" id="GO:0001946">
    <property type="term" value="P:lymphangiogenesis"/>
    <property type="evidence" value="ECO:0000250"/>
    <property type="project" value="UniProtKB"/>
</dbReference>
<dbReference type="GO" id="GO:0043066">
    <property type="term" value="P:negative regulation of apoptotic process"/>
    <property type="evidence" value="ECO:0000266"/>
    <property type="project" value="RGD"/>
</dbReference>
<dbReference type="GO" id="GO:0030307">
    <property type="term" value="P:positive regulation of cell growth"/>
    <property type="evidence" value="ECO:0000314"/>
    <property type="project" value="RGD"/>
</dbReference>
<dbReference type="GO" id="GO:0030335">
    <property type="term" value="P:positive regulation of cell migration"/>
    <property type="evidence" value="ECO:0000318"/>
    <property type="project" value="GO_Central"/>
</dbReference>
<dbReference type="GO" id="GO:0008284">
    <property type="term" value="P:positive regulation of cell population proliferation"/>
    <property type="evidence" value="ECO:0000266"/>
    <property type="project" value="RGD"/>
</dbReference>
<dbReference type="GO" id="GO:0010595">
    <property type="term" value="P:positive regulation of endothelial cell migration"/>
    <property type="evidence" value="ECO:0000266"/>
    <property type="project" value="RGD"/>
</dbReference>
<dbReference type="GO" id="GO:0001938">
    <property type="term" value="P:positive regulation of endothelial cell proliferation"/>
    <property type="evidence" value="ECO:0000266"/>
    <property type="project" value="RGD"/>
</dbReference>
<dbReference type="GO" id="GO:0070374">
    <property type="term" value="P:positive regulation of ERK1 and ERK2 cascade"/>
    <property type="evidence" value="ECO:0000266"/>
    <property type="project" value="RGD"/>
</dbReference>
<dbReference type="GO" id="GO:0046330">
    <property type="term" value="P:positive regulation of JNK cascade"/>
    <property type="evidence" value="ECO:0000266"/>
    <property type="project" value="RGD"/>
</dbReference>
<dbReference type="GO" id="GO:0043410">
    <property type="term" value="P:positive regulation of MAPK cascade"/>
    <property type="evidence" value="ECO:0000266"/>
    <property type="project" value="RGD"/>
</dbReference>
<dbReference type="GO" id="GO:0010575">
    <property type="term" value="P:positive regulation of vascular endothelial growth factor production"/>
    <property type="evidence" value="ECO:0000266"/>
    <property type="project" value="RGD"/>
</dbReference>
<dbReference type="GO" id="GO:0046777">
    <property type="term" value="P:protein autophosphorylation"/>
    <property type="evidence" value="ECO:0000250"/>
    <property type="project" value="UniProtKB"/>
</dbReference>
<dbReference type="GO" id="GO:0060312">
    <property type="term" value="P:regulation of blood vessel remodeling"/>
    <property type="evidence" value="ECO:0000250"/>
    <property type="project" value="UniProtKB"/>
</dbReference>
<dbReference type="GO" id="GO:0007585">
    <property type="term" value="P:respiratory gaseous exchange by respiratory system"/>
    <property type="evidence" value="ECO:0000266"/>
    <property type="project" value="RGD"/>
</dbReference>
<dbReference type="GO" id="GO:0003016">
    <property type="term" value="P:respiratory system process"/>
    <property type="evidence" value="ECO:0000266"/>
    <property type="project" value="RGD"/>
</dbReference>
<dbReference type="GO" id="GO:0002040">
    <property type="term" value="P:sprouting angiogenesis"/>
    <property type="evidence" value="ECO:0000250"/>
    <property type="project" value="UniProtKB"/>
</dbReference>
<dbReference type="GO" id="GO:0048010">
    <property type="term" value="P:vascular endothelial growth factor receptor signaling pathway"/>
    <property type="evidence" value="ECO:0000315"/>
    <property type="project" value="RGD"/>
</dbReference>
<dbReference type="GO" id="GO:0038084">
    <property type="term" value="P:vascular endothelial growth factor signaling pathway"/>
    <property type="evidence" value="ECO:0000250"/>
    <property type="project" value="UniProtKB"/>
</dbReference>
<dbReference type="GO" id="GO:0001944">
    <property type="term" value="P:vasculature development"/>
    <property type="evidence" value="ECO:0000250"/>
    <property type="project" value="UniProtKB"/>
</dbReference>
<dbReference type="CDD" id="cd00096">
    <property type="entry name" value="Ig"/>
    <property type="match status" value="1"/>
</dbReference>
<dbReference type="CDD" id="cd05862">
    <property type="entry name" value="IgI_VEGFR"/>
    <property type="match status" value="1"/>
</dbReference>
<dbReference type="FunFam" id="1.10.510.10:FF:000077">
    <property type="entry name" value="Vascular endothelial growth factor receptor 2"/>
    <property type="match status" value="1"/>
</dbReference>
<dbReference type="FunFam" id="2.60.40.10:FF:000532">
    <property type="entry name" value="Vascular endothelial growth factor receptor 2"/>
    <property type="match status" value="1"/>
</dbReference>
<dbReference type="FunFam" id="3.30.200.20:FF:000041">
    <property type="entry name" value="Vascular endothelial growth factor receptor 2"/>
    <property type="match status" value="1"/>
</dbReference>
<dbReference type="FunFam" id="2.60.40.10:FF:000143">
    <property type="entry name" value="Vascular endothelial growth factor receptor 3"/>
    <property type="match status" value="1"/>
</dbReference>
<dbReference type="FunFam" id="2.60.40.10:FF:000247">
    <property type="entry name" value="Vascular endothelial growth factor receptor 3"/>
    <property type="match status" value="1"/>
</dbReference>
<dbReference type="FunFam" id="2.60.40.10:FF:000411">
    <property type="entry name" value="Vascular endothelial growth factor receptor 3"/>
    <property type="match status" value="1"/>
</dbReference>
<dbReference type="FunFam" id="2.60.40.10:FF:000479">
    <property type="entry name" value="Vascular endothelial growth factor receptor 3"/>
    <property type="match status" value="1"/>
</dbReference>
<dbReference type="FunFam" id="2.60.40.10:FF:000548">
    <property type="entry name" value="vascular endothelial growth factor receptor 3"/>
    <property type="match status" value="1"/>
</dbReference>
<dbReference type="FunFam" id="2.60.40.10:FF:000949">
    <property type="entry name" value="vascular endothelial growth factor receptor 3"/>
    <property type="match status" value="1"/>
</dbReference>
<dbReference type="Gene3D" id="2.60.40.10">
    <property type="entry name" value="Immunoglobulins"/>
    <property type="match status" value="7"/>
</dbReference>
<dbReference type="Gene3D" id="3.30.200.20">
    <property type="entry name" value="Phosphorylase Kinase, domain 1"/>
    <property type="match status" value="1"/>
</dbReference>
<dbReference type="Gene3D" id="1.10.510.10">
    <property type="entry name" value="Transferase(Phosphotransferase) domain 1"/>
    <property type="match status" value="1"/>
</dbReference>
<dbReference type="InterPro" id="IPR007110">
    <property type="entry name" value="Ig-like_dom"/>
</dbReference>
<dbReference type="InterPro" id="IPR036179">
    <property type="entry name" value="Ig-like_dom_sf"/>
</dbReference>
<dbReference type="InterPro" id="IPR013783">
    <property type="entry name" value="Ig-like_fold"/>
</dbReference>
<dbReference type="InterPro" id="IPR013098">
    <property type="entry name" value="Ig_I-set"/>
</dbReference>
<dbReference type="InterPro" id="IPR003599">
    <property type="entry name" value="Ig_sub"/>
</dbReference>
<dbReference type="InterPro" id="IPR003598">
    <property type="entry name" value="Ig_sub2"/>
</dbReference>
<dbReference type="InterPro" id="IPR011009">
    <property type="entry name" value="Kinase-like_dom_sf"/>
</dbReference>
<dbReference type="InterPro" id="IPR000719">
    <property type="entry name" value="Prot_kinase_dom"/>
</dbReference>
<dbReference type="InterPro" id="IPR017441">
    <property type="entry name" value="Protein_kinase_ATP_BS"/>
</dbReference>
<dbReference type="InterPro" id="IPR050122">
    <property type="entry name" value="RTK"/>
</dbReference>
<dbReference type="InterPro" id="IPR001245">
    <property type="entry name" value="Ser-Thr/Tyr_kinase_cat_dom"/>
</dbReference>
<dbReference type="InterPro" id="IPR008266">
    <property type="entry name" value="Tyr_kinase_AS"/>
</dbReference>
<dbReference type="InterPro" id="IPR020635">
    <property type="entry name" value="Tyr_kinase_cat_dom"/>
</dbReference>
<dbReference type="InterPro" id="IPR001824">
    <property type="entry name" value="Tyr_kinase_rcpt_3_CS"/>
</dbReference>
<dbReference type="InterPro" id="IPR041348">
    <property type="entry name" value="VEGFR-2_TMD"/>
</dbReference>
<dbReference type="InterPro" id="IPR055229">
    <property type="entry name" value="VEGFR1-3_5th"/>
</dbReference>
<dbReference type="InterPro" id="IPR055238">
    <property type="entry name" value="VEGFR1-3_N_Ig-like"/>
</dbReference>
<dbReference type="PANTHER" id="PTHR24416">
    <property type="entry name" value="TYROSINE-PROTEIN KINASE RECEPTOR"/>
    <property type="match status" value="1"/>
</dbReference>
<dbReference type="PANTHER" id="PTHR24416:SF49">
    <property type="entry name" value="VASCULAR ENDOTHELIAL GROWTH FACTOR RECEPTOR 3"/>
    <property type="match status" value="1"/>
</dbReference>
<dbReference type="Pfam" id="PF07679">
    <property type="entry name" value="I-set"/>
    <property type="match status" value="1"/>
</dbReference>
<dbReference type="Pfam" id="PF13927">
    <property type="entry name" value="Ig_3"/>
    <property type="match status" value="2"/>
</dbReference>
<dbReference type="Pfam" id="PF22971">
    <property type="entry name" value="Ig_VEGFR-1-like_5th"/>
    <property type="match status" value="1"/>
</dbReference>
<dbReference type="Pfam" id="PF07714">
    <property type="entry name" value="PK_Tyr_Ser-Thr"/>
    <property type="match status" value="1"/>
</dbReference>
<dbReference type="Pfam" id="PF21339">
    <property type="entry name" value="VEGFR-1-like_Ig-like"/>
    <property type="match status" value="1"/>
</dbReference>
<dbReference type="Pfam" id="PF17988">
    <property type="entry name" value="VEGFR-2_TMD"/>
    <property type="match status" value="1"/>
</dbReference>
<dbReference type="Pfam" id="PF22854">
    <property type="entry name" value="VEGFR1-3_N_Ig-like"/>
    <property type="match status" value="1"/>
</dbReference>
<dbReference type="PIRSF" id="PIRSF000615">
    <property type="entry name" value="TyrPK_CSF1-R"/>
    <property type="match status" value="1"/>
</dbReference>
<dbReference type="PRINTS" id="PR01832">
    <property type="entry name" value="VEGFRECEPTOR"/>
</dbReference>
<dbReference type="PRINTS" id="PR01835">
    <property type="entry name" value="VEGFRECEPTR3"/>
</dbReference>
<dbReference type="SMART" id="SM00409">
    <property type="entry name" value="IG"/>
    <property type="match status" value="7"/>
</dbReference>
<dbReference type="SMART" id="SM00408">
    <property type="entry name" value="IGc2"/>
    <property type="match status" value="4"/>
</dbReference>
<dbReference type="SMART" id="SM00219">
    <property type="entry name" value="TyrKc"/>
    <property type="match status" value="1"/>
</dbReference>
<dbReference type="SUPFAM" id="SSF48726">
    <property type="entry name" value="Immunoglobulin"/>
    <property type="match status" value="5"/>
</dbReference>
<dbReference type="SUPFAM" id="SSF56112">
    <property type="entry name" value="Protein kinase-like (PK-like)"/>
    <property type="match status" value="1"/>
</dbReference>
<dbReference type="PROSITE" id="PS50835">
    <property type="entry name" value="IG_LIKE"/>
    <property type="match status" value="6"/>
</dbReference>
<dbReference type="PROSITE" id="PS00107">
    <property type="entry name" value="PROTEIN_KINASE_ATP"/>
    <property type="match status" value="1"/>
</dbReference>
<dbReference type="PROSITE" id="PS50011">
    <property type="entry name" value="PROTEIN_KINASE_DOM"/>
    <property type="match status" value="1"/>
</dbReference>
<dbReference type="PROSITE" id="PS00109">
    <property type="entry name" value="PROTEIN_KINASE_TYR"/>
    <property type="match status" value="1"/>
</dbReference>
<dbReference type="PROSITE" id="PS00240">
    <property type="entry name" value="RECEPTOR_TYR_KIN_III"/>
    <property type="match status" value="1"/>
</dbReference>
<gene>
    <name type="primary">Flt4</name>
    <name type="synonym">Flt-4</name>
    <name type="synonym">Vegfr3</name>
</gene>